<evidence type="ECO:0000255" key="1">
    <source>
        <dbReference type="HAMAP-Rule" id="MF_01007"/>
    </source>
</evidence>
<evidence type="ECO:0000305" key="2"/>
<keyword id="KW-0963">Cytoplasm</keyword>
<keyword id="KW-0489">Methyltransferase</keyword>
<keyword id="KW-1185">Reference proteome</keyword>
<keyword id="KW-0698">rRNA processing</keyword>
<keyword id="KW-0949">S-adenosyl-L-methionine</keyword>
<keyword id="KW-0808">Transferase</keyword>
<comment type="function">
    <text evidence="1">Specifically methylates the N4 position of cytidine in position 1402 (C1402) of 16S rRNA.</text>
</comment>
<comment type="catalytic activity">
    <reaction evidence="1">
        <text>cytidine(1402) in 16S rRNA + S-adenosyl-L-methionine = N(4)-methylcytidine(1402) in 16S rRNA + S-adenosyl-L-homocysteine + H(+)</text>
        <dbReference type="Rhea" id="RHEA:42928"/>
        <dbReference type="Rhea" id="RHEA-COMP:10286"/>
        <dbReference type="Rhea" id="RHEA-COMP:10287"/>
        <dbReference type="ChEBI" id="CHEBI:15378"/>
        <dbReference type="ChEBI" id="CHEBI:57856"/>
        <dbReference type="ChEBI" id="CHEBI:59789"/>
        <dbReference type="ChEBI" id="CHEBI:74506"/>
        <dbReference type="ChEBI" id="CHEBI:82748"/>
        <dbReference type="EC" id="2.1.1.199"/>
    </reaction>
</comment>
<comment type="subcellular location">
    <subcellularLocation>
        <location evidence="1">Cytoplasm</location>
    </subcellularLocation>
</comment>
<comment type="similarity">
    <text evidence="1">Belongs to the methyltransferase superfamily. RsmH family.</text>
</comment>
<comment type="sequence caution" evidence="2">
    <conflict type="erroneous initiation">
        <sequence resource="EMBL-CDS" id="ABI99566"/>
    </conflict>
</comment>
<protein>
    <recommendedName>
        <fullName evidence="1">Ribosomal RNA small subunit methyltransferase H</fullName>
        <ecNumber evidence="1">2.1.1.199</ecNumber>
    </recommendedName>
    <alternativeName>
        <fullName evidence="1">16S rRNA m(4)C1402 methyltransferase</fullName>
    </alternativeName>
    <alternativeName>
        <fullName evidence="1">rRNA (cytosine-N(4)-)-methyltransferase RsmH</fullName>
    </alternativeName>
</protein>
<proteinExistence type="inferred from homology"/>
<name>RSMH_ECOK1</name>
<gene>
    <name evidence="1" type="primary">rsmH</name>
    <name type="synonym">mraW</name>
    <name type="ordered locus">Ecok1_00730</name>
    <name type="ORF">APECO1_1904</name>
</gene>
<dbReference type="EC" id="2.1.1.199" evidence="1"/>
<dbReference type="EMBL" id="CP000468">
    <property type="protein sequence ID" value="ABI99566.1"/>
    <property type="status" value="ALT_INIT"/>
    <property type="molecule type" value="Genomic_DNA"/>
</dbReference>
<dbReference type="RefSeq" id="WP_000970479.1">
    <property type="nucleotide sequence ID" value="NZ_CADILS010000048.1"/>
</dbReference>
<dbReference type="SMR" id="A1A7C7"/>
<dbReference type="GeneID" id="86862592"/>
<dbReference type="KEGG" id="ecv:APECO1_1904"/>
<dbReference type="HOGENOM" id="CLU_038422_2_0_6"/>
<dbReference type="Proteomes" id="UP000008216">
    <property type="component" value="Chromosome"/>
</dbReference>
<dbReference type="GO" id="GO:0005737">
    <property type="term" value="C:cytoplasm"/>
    <property type="evidence" value="ECO:0007669"/>
    <property type="project" value="UniProtKB-SubCell"/>
</dbReference>
<dbReference type="GO" id="GO:0071424">
    <property type="term" value="F:rRNA (cytosine-N4-)-methyltransferase activity"/>
    <property type="evidence" value="ECO:0007669"/>
    <property type="project" value="UniProtKB-UniRule"/>
</dbReference>
<dbReference type="GO" id="GO:0070475">
    <property type="term" value="P:rRNA base methylation"/>
    <property type="evidence" value="ECO:0007669"/>
    <property type="project" value="UniProtKB-UniRule"/>
</dbReference>
<dbReference type="FunFam" id="1.10.150.170:FF:000001">
    <property type="entry name" value="Ribosomal RNA small subunit methyltransferase H"/>
    <property type="match status" value="1"/>
</dbReference>
<dbReference type="Gene3D" id="1.10.150.170">
    <property type="entry name" value="Putative methyltransferase TM0872, insert domain"/>
    <property type="match status" value="1"/>
</dbReference>
<dbReference type="Gene3D" id="3.40.50.150">
    <property type="entry name" value="Vaccinia Virus protein VP39"/>
    <property type="match status" value="1"/>
</dbReference>
<dbReference type="HAMAP" id="MF_01007">
    <property type="entry name" value="16SrRNA_methyltr_H"/>
    <property type="match status" value="1"/>
</dbReference>
<dbReference type="InterPro" id="IPR002903">
    <property type="entry name" value="RsmH"/>
</dbReference>
<dbReference type="InterPro" id="IPR023397">
    <property type="entry name" value="SAM-dep_MeTrfase_MraW_recog"/>
</dbReference>
<dbReference type="InterPro" id="IPR029063">
    <property type="entry name" value="SAM-dependent_MTases_sf"/>
</dbReference>
<dbReference type="NCBIfam" id="TIGR00006">
    <property type="entry name" value="16S rRNA (cytosine(1402)-N(4))-methyltransferase RsmH"/>
    <property type="match status" value="1"/>
</dbReference>
<dbReference type="PANTHER" id="PTHR11265:SF0">
    <property type="entry name" value="12S RRNA N4-METHYLCYTIDINE METHYLTRANSFERASE"/>
    <property type="match status" value="1"/>
</dbReference>
<dbReference type="PANTHER" id="PTHR11265">
    <property type="entry name" value="S-ADENOSYL-METHYLTRANSFERASE MRAW"/>
    <property type="match status" value="1"/>
</dbReference>
<dbReference type="Pfam" id="PF01795">
    <property type="entry name" value="Methyltransf_5"/>
    <property type="match status" value="1"/>
</dbReference>
<dbReference type="PIRSF" id="PIRSF004486">
    <property type="entry name" value="MraW"/>
    <property type="match status" value="1"/>
</dbReference>
<dbReference type="SUPFAM" id="SSF81799">
    <property type="entry name" value="Putative methyltransferase TM0872, insert domain"/>
    <property type="match status" value="1"/>
</dbReference>
<dbReference type="SUPFAM" id="SSF53335">
    <property type="entry name" value="S-adenosyl-L-methionine-dependent methyltransferases"/>
    <property type="match status" value="1"/>
</dbReference>
<accession>A1A7C7</accession>
<sequence length="313" mass="34878">MMENYKHTTVLLDEAVNGLNIRPDGIYIDGTFGRGGHSRLILSQLGEEGRLLAIDRDPQAIAVAKTIDDPRFSIIHGPFSALGEYVAERDLIGKIDGILLDLGVSSPQLDDAERGFSFMRDGPLDMRMDPTRGQSAAEWLQTAEEADIAWVLKTYGEERFAKRIARAIVERNREQPMTRTKELAEVVAAATPVKDKFKHPATRTFQAVRIWVNSELEEIEQALKSSLNVLAPGGRLSIISFHSLEDRIVKRFMRENSRGPQVPAGLPMTEEQLKKLGGRQLRALGKLMPGEEEVAENPRARSSVLRIAERTNA</sequence>
<organism>
    <name type="scientific">Escherichia coli O1:K1 / APEC</name>
    <dbReference type="NCBI Taxonomy" id="405955"/>
    <lineage>
        <taxon>Bacteria</taxon>
        <taxon>Pseudomonadati</taxon>
        <taxon>Pseudomonadota</taxon>
        <taxon>Gammaproteobacteria</taxon>
        <taxon>Enterobacterales</taxon>
        <taxon>Enterobacteriaceae</taxon>
        <taxon>Escherichia</taxon>
    </lineage>
</organism>
<feature type="chain" id="PRO_0000386880" description="Ribosomal RNA small subunit methyltransferase H">
    <location>
        <begin position="1"/>
        <end position="313"/>
    </location>
</feature>
<feature type="binding site" evidence="1">
    <location>
        <begin position="35"/>
        <end position="37"/>
    </location>
    <ligand>
        <name>S-adenosyl-L-methionine</name>
        <dbReference type="ChEBI" id="CHEBI:59789"/>
    </ligand>
</feature>
<feature type="binding site" evidence="1">
    <location>
        <position position="55"/>
    </location>
    <ligand>
        <name>S-adenosyl-L-methionine</name>
        <dbReference type="ChEBI" id="CHEBI:59789"/>
    </ligand>
</feature>
<feature type="binding site" evidence="1">
    <location>
        <position position="79"/>
    </location>
    <ligand>
        <name>S-adenosyl-L-methionine</name>
        <dbReference type="ChEBI" id="CHEBI:59789"/>
    </ligand>
</feature>
<feature type="binding site" evidence="1">
    <location>
        <position position="101"/>
    </location>
    <ligand>
        <name>S-adenosyl-L-methionine</name>
        <dbReference type="ChEBI" id="CHEBI:59789"/>
    </ligand>
</feature>
<feature type="binding site" evidence="1">
    <location>
        <position position="108"/>
    </location>
    <ligand>
        <name>S-adenosyl-L-methionine</name>
        <dbReference type="ChEBI" id="CHEBI:59789"/>
    </ligand>
</feature>
<reference key="1">
    <citation type="journal article" date="2007" name="J. Bacteriol.">
        <title>The genome sequence of avian pathogenic Escherichia coli strain O1:K1:H7 shares strong similarities with human extraintestinal pathogenic E. coli genomes.</title>
        <authorList>
            <person name="Johnson T.J."/>
            <person name="Kariyawasam S."/>
            <person name="Wannemuehler Y."/>
            <person name="Mangiamele P."/>
            <person name="Johnson S.J."/>
            <person name="Doetkott C."/>
            <person name="Skyberg J.A."/>
            <person name="Lynne A.M."/>
            <person name="Johnson J.R."/>
            <person name="Nolan L.K."/>
        </authorList>
    </citation>
    <scope>NUCLEOTIDE SEQUENCE [LARGE SCALE GENOMIC DNA]</scope>
</reference>